<evidence type="ECO:0000255" key="1">
    <source>
        <dbReference type="HAMAP-Rule" id="MF_00219"/>
    </source>
</evidence>
<dbReference type="EC" id="3.5.2.3" evidence="1"/>
<dbReference type="EMBL" id="AM933173">
    <property type="protein sequence ID" value="CAR37809.1"/>
    <property type="molecule type" value="Genomic_DNA"/>
</dbReference>
<dbReference type="RefSeq" id="WP_000126602.1">
    <property type="nucleotide sequence ID" value="NC_011274.1"/>
</dbReference>
<dbReference type="SMR" id="B5RBD7"/>
<dbReference type="MEROPS" id="M38.A02"/>
<dbReference type="KEGG" id="seg:SG1959"/>
<dbReference type="HOGENOM" id="CLU_041558_1_0_6"/>
<dbReference type="UniPathway" id="UPA00070">
    <property type="reaction ID" value="UER00117"/>
</dbReference>
<dbReference type="Proteomes" id="UP000008321">
    <property type="component" value="Chromosome"/>
</dbReference>
<dbReference type="GO" id="GO:0005829">
    <property type="term" value="C:cytosol"/>
    <property type="evidence" value="ECO:0007669"/>
    <property type="project" value="TreeGrafter"/>
</dbReference>
<dbReference type="GO" id="GO:0004151">
    <property type="term" value="F:dihydroorotase activity"/>
    <property type="evidence" value="ECO:0007669"/>
    <property type="project" value="UniProtKB-UniRule"/>
</dbReference>
<dbReference type="GO" id="GO:0008270">
    <property type="term" value="F:zinc ion binding"/>
    <property type="evidence" value="ECO:0007669"/>
    <property type="project" value="UniProtKB-UniRule"/>
</dbReference>
<dbReference type="GO" id="GO:0006207">
    <property type="term" value="P:'de novo' pyrimidine nucleobase biosynthetic process"/>
    <property type="evidence" value="ECO:0007669"/>
    <property type="project" value="TreeGrafter"/>
</dbReference>
<dbReference type="GO" id="GO:0044205">
    <property type="term" value="P:'de novo' UMP biosynthetic process"/>
    <property type="evidence" value="ECO:0007669"/>
    <property type="project" value="UniProtKB-UniRule"/>
</dbReference>
<dbReference type="CDD" id="cd01294">
    <property type="entry name" value="DHOase"/>
    <property type="match status" value="1"/>
</dbReference>
<dbReference type="FunFam" id="3.20.20.140:FF:000006">
    <property type="entry name" value="Dihydroorotase"/>
    <property type="match status" value="1"/>
</dbReference>
<dbReference type="Gene3D" id="3.20.20.140">
    <property type="entry name" value="Metal-dependent hydrolases"/>
    <property type="match status" value="1"/>
</dbReference>
<dbReference type="HAMAP" id="MF_00219">
    <property type="entry name" value="PyrC_classII"/>
    <property type="match status" value="1"/>
</dbReference>
<dbReference type="InterPro" id="IPR006680">
    <property type="entry name" value="Amidohydro-rel"/>
</dbReference>
<dbReference type="InterPro" id="IPR004721">
    <property type="entry name" value="DHOdimr"/>
</dbReference>
<dbReference type="InterPro" id="IPR002195">
    <property type="entry name" value="Dihydroorotase_CS"/>
</dbReference>
<dbReference type="InterPro" id="IPR032466">
    <property type="entry name" value="Metal_Hydrolase"/>
</dbReference>
<dbReference type="NCBIfam" id="TIGR00856">
    <property type="entry name" value="pyrC_dimer"/>
    <property type="match status" value="1"/>
</dbReference>
<dbReference type="PANTHER" id="PTHR43137">
    <property type="entry name" value="DIHYDROOROTASE"/>
    <property type="match status" value="1"/>
</dbReference>
<dbReference type="PANTHER" id="PTHR43137:SF1">
    <property type="entry name" value="DIHYDROOROTASE"/>
    <property type="match status" value="1"/>
</dbReference>
<dbReference type="Pfam" id="PF01979">
    <property type="entry name" value="Amidohydro_1"/>
    <property type="match status" value="1"/>
</dbReference>
<dbReference type="PIRSF" id="PIRSF001237">
    <property type="entry name" value="DHOdimr"/>
    <property type="match status" value="1"/>
</dbReference>
<dbReference type="SUPFAM" id="SSF51556">
    <property type="entry name" value="Metallo-dependent hydrolases"/>
    <property type="match status" value="1"/>
</dbReference>
<dbReference type="PROSITE" id="PS00482">
    <property type="entry name" value="DIHYDROOROTASE_1"/>
    <property type="match status" value="1"/>
</dbReference>
<dbReference type="PROSITE" id="PS00483">
    <property type="entry name" value="DIHYDROOROTASE_2"/>
    <property type="match status" value="1"/>
</dbReference>
<keyword id="KW-0378">Hydrolase</keyword>
<keyword id="KW-0479">Metal-binding</keyword>
<keyword id="KW-0665">Pyrimidine biosynthesis</keyword>
<keyword id="KW-0862">Zinc</keyword>
<accession>B5RBD7</accession>
<gene>
    <name evidence="1" type="primary">pyrC</name>
    <name type="ordered locus">SG1959</name>
</gene>
<organism>
    <name type="scientific">Salmonella gallinarum (strain 287/91 / NCTC 13346)</name>
    <dbReference type="NCBI Taxonomy" id="550538"/>
    <lineage>
        <taxon>Bacteria</taxon>
        <taxon>Pseudomonadati</taxon>
        <taxon>Pseudomonadota</taxon>
        <taxon>Gammaproteobacteria</taxon>
        <taxon>Enterobacterales</taxon>
        <taxon>Enterobacteriaceae</taxon>
        <taxon>Salmonella</taxon>
    </lineage>
</organism>
<protein>
    <recommendedName>
        <fullName evidence="1">Dihydroorotase</fullName>
        <shortName evidence="1">DHOase</shortName>
        <ecNumber evidence="1">3.5.2.3</ecNumber>
    </recommendedName>
</protein>
<name>PYRC_SALG2</name>
<sequence>MTAPSQVLKIRRPDDWHVHLRDGDMLKTVVPYTSEIYGRAIVMPNLASPITTVDAAIAYRQRILDAVPAGHDFTPLMTCYLTDSLDADELERGFHEGVFTAAKLYPANATTNSSHGVTSVDAIMPVLERMEKLGMPLLVHGEVTHAEVDIFDREARFIDTVMEPLRQRLTALKVVFEHITTKDAAQYVRDGNDYLAATITPQHLMFNRNDMLVGGIRPHLYCLPILKRNIHQQALRELVASGFTRAFLGTDSAPHSRHRKETSCGCAGCFNAPSALGSYAAVFEEMNALAHFEAFCSLNGPQFYGLPVNAGWVELVRDEQQVPENIALADDSLVPFLAGETVRWSVKK</sequence>
<reference key="1">
    <citation type="journal article" date="2008" name="Genome Res.">
        <title>Comparative genome analysis of Salmonella enteritidis PT4 and Salmonella gallinarum 287/91 provides insights into evolutionary and host adaptation pathways.</title>
        <authorList>
            <person name="Thomson N.R."/>
            <person name="Clayton D.J."/>
            <person name="Windhorst D."/>
            <person name="Vernikos G."/>
            <person name="Davidson S."/>
            <person name="Churcher C."/>
            <person name="Quail M.A."/>
            <person name="Stevens M."/>
            <person name="Jones M.A."/>
            <person name="Watson M."/>
            <person name="Barron A."/>
            <person name="Layton A."/>
            <person name="Pickard D."/>
            <person name="Kingsley R.A."/>
            <person name="Bignell A."/>
            <person name="Clark L."/>
            <person name="Harris B."/>
            <person name="Ormond D."/>
            <person name="Abdellah Z."/>
            <person name="Brooks K."/>
            <person name="Cherevach I."/>
            <person name="Chillingworth T."/>
            <person name="Woodward J."/>
            <person name="Norberczak H."/>
            <person name="Lord A."/>
            <person name="Arrowsmith C."/>
            <person name="Jagels K."/>
            <person name="Moule S."/>
            <person name="Mungall K."/>
            <person name="Saunders M."/>
            <person name="Whitehead S."/>
            <person name="Chabalgoity J.A."/>
            <person name="Maskell D."/>
            <person name="Humphreys T."/>
            <person name="Roberts M."/>
            <person name="Barrow P.A."/>
            <person name="Dougan G."/>
            <person name="Parkhill J."/>
        </authorList>
    </citation>
    <scope>NUCLEOTIDE SEQUENCE [LARGE SCALE GENOMIC DNA]</scope>
    <source>
        <strain>287/91 / NCTC 13346</strain>
    </source>
</reference>
<comment type="function">
    <text evidence="1">Catalyzes the reversible cyclization of carbamoyl aspartate to dihydroorotate.</text>
</comment>
<comment type="catalytic activity">
    <reaction evidence="1">
        <text>(S)-dihydroorotate + H2O = N-carbamoyl-L-aspartate + H(+)</text>
        <dbReference type="Rhea" id="RHEA:24296"/>
        <dbReference type="ChEBI" id="CHEBI:15377"/>
        <dbReference type="ChEBI" id="CHEBI:15378"/>
        <dbReference type="ChEBI" id="CHEBI:30864"/>
        <dbReference type="ChEBI" id="CHEBI:32814"/>
        <dbReference type="EC" id="3.5.2.3"/>
    </reaction>
</comment>
<comment type="cofactor">
    <cofactor evidence="1">
        <name>Zn(2+)</name>
        <dbReference type="ChEBI" id="CHEBI:29105"/>
    </cofactor>
    <text evidence="1">Binds 2 Zn(2+) ions per subunit.</text>
</comment>
<comment type="pathway">
    <text evidence="1">Pyrimidine metabolism; UMP biosynthesis via de novo pathway; (S)-dihydroorotate from bicarbonate: step 3/3.</text>
</comment>
<comment type="subunit">
    <text evidence="1">Homodimer.</text>
</comment>
<comment type="similarity">
    <text evidence="1">Belongs to the metallo-dependent hydrolases superfamily. DHOase family. Class II DHOase subfamily.</text>
</comment>
<proteinExistence type="inferred from homology"/>
<feature type="chain" id="PRO_1000100058" description="Dihydroorotase">
    <location>
        <begin position="1"/>
        <end position="348"/>
    </location>
</feature>
<feature type="active site" evidence="1">
    <location>
        <position position="251"/>
    </location>
</feature>
<feature type="binding site" evidence="1">
    <location>
        <position position="17"/>
    </location>
    <ligand>
        <name>Zn(2+)</name>
        <dbReference type="ChEBI" id="CHEBI:29105"/>
        <label>1</label>
    </ligand>
</feature>
<feature type="binding site" evidence="1">
    <location>
        <begin position="19"/>
        <end position="21"/>
    </location>
    <ligand>
        <name>substrate</name>
    </ligand>
</feature>
<feature type="binding site" evidence="1">
    <location>
        <position position="19"/>
    </location>
    <ligand>
        <name>Zn(2+)</name>
        <dbReference type="ChEBI" id="CHEBI:29105"/>
        <label>1</label>
    </ligand>
</feature>
<feature type="binding site" evidence="1">
    <location>
        <position position="45"/>
    </location>
    <ligand>
        <name>substrate</name>
    </ligand>
</feature>
<feature type="binding site" description="via carbamate group" evidence="1">
    <location>
        <position position="103"/>
    </location>
    <ligand>
        <name>Zn(2+)</name>
        <dbReference type="ChEBI" id="CHEBI:29105"/>
        <label>1</label>
    </ligand>
</feature>
<feature type="binding site" description="via carbamate group" evidence="1">
    <location>
        <position position="103"/>
    </location>
    <ligand>
        <name>Zn(2+)</name>
        <dbReference type="ChEBI" id="CHEBI:29105"/>
        <label>2</label>
    </ligand>
</feature>
<feature type="binding site" evidence="1">
    <location>
        <position position="140"/>
    </location>
    <ligand>
        <name>substrate</name>
    </ligand>
</feature>
<feature type="binding site" evidence="1">
    <location>
        <position position="140"/>
    </location>
    <ligand>
        <name>Zn(2+)</name>
        <dbReference type="ChEBI" id="CHEBI:29105"/>
        <label>2</label>
    </ligand>
</feature>
<feature type="binding site" evidence="1">
    <location>
        <position position="178"/>
    </location>
    <ligand>
        <name>Zn(2+)</name>
        <dbReference type="ChEBI" id="CHEBI:29105"/>
        <label>2</label>
    </ligand>
</feature>
<feature type="binding site" evidence="1">
    <location>
        <position position="223"/>
    </location>
    <ligand>
        <name>substrate</name>
    </ligand>
</feature>
<feature type="binding site" evidence="1">
    <location>
        <position position="251"/>
    </location>
    <ligand>
        <name>Zn(2+)</name>
        <dbReference type="ChEBI" id="CHEBI:29105"/>
        <label>1</label>
    </ligand>
</feature>
<feature type="binding site" evidence="1">
    <location>
        <position position="255"/>
    </location>
    <ligand>
        <name>substrate</name>
    </ligand>
</feature>
<feature type="binding site" evidence="1">
    <location>
        <position position="267"/>
    </location>
    <ligand>
        <name>substrate</name>
    </ligand>
</feature>
<feature type="modified residue" description="N6-carboxylysine" evidence="1">
    <location>
        <position position="103"/>
    </location>
</feature>